<name>CB5D1_XENTR</name>
<feature type="chain" id="PRO_0000312320" description="Cytochrome b5 domain-containing protein 1">
    <location>
        <begin position="1"/>
        <end position="217"/>
    </location>
</feature>
<feature type="domain" description="Cytochrome b5 heme-binding" evidence="2">
    <location>
        <begin position="6"/>
        <end position="72"/>
    </location>
</feature>
<feature type="binding site" description="axial binding residue" evidence="2">
    <location>
        <position position="41"/>
    </location>
    <ligand>
        <name>heme</name>
        <dbReference type="ChEBI" id="CHEBI:30413"/>
    </ligand>
    <ligandPart>
        <name>Fe</name>
        <dbReference type="ChEBI" id="CHEBI:18248"/>
    </ligandPart>
</feature>
<feature type="binding site" description="axial binding residue" evidence="2">
    <location>
        <position position="72"/>
    </location>
    <ligand>
        <name>heme</name>
        <dbReference type="ChEBI" id="CHEBI:30413"/>
    </ligand>
    <ligandPart>
        <name>Fe</name>
        <dbReference type="ChEBI" id="CHEBI:18248"/>
    </ligandPart>
</feature>
<organism>
    <name type="scientific">Xenopus tropicalis</name>
    <name type="common">Western clawed frog</name>
    <name type="synonym">Silurana tropicalis</name>
    <dbReference type="NCBI Taxonomy" id="8364"/>
    <lineage>
        <taxon>Eukaryota</taxon>
        <taxon>Metazoa</taxon>
        <taxon>Chordata</taxon>
        <taxon>Craniata</taxon>
        <taxon>Vertebrata</taxon>
        <taxon>Euteleostomi</taxon>
        <taxon>Amphibia</taxon>
        <taxon>Batrachia</taxon>
        <taxon>Anura</taxon>
        <taxon>Pipoidea</taxon>
        <taxon>Pipidae</taxon>
        <taxon>Xenopodinae</taxon>
        <taxon>Xenopus</taxon>
        <taxon>Silurana</taxon>
    </lineage>
</organism>
<comment type="function">
    <text evidence="1">Radial spoke stalk protein that binds heme under oxidizing conditions. Required for the coordinated beating of multiple cilia maybe by functioning in a redox signaling pathway.</text>
</comment>
<comment type="subcellular location">
    <subcellularLocation>
        <location evidence="1">Cytoplasm</location>
        <location evidence="1">Cytoskeleton</location>
        <location evidence="1">Cilium axoneme</location>
    </subcellularLocation>
    <text evidence="1">Localizes to the radial spoke stalk.</text>
</comment>
<comment type="similarity">
    <text evidence="3">Belongs to the cytochrome b5 family.</text>
</comment>
<gene>
    <name type="primary">cyb5d1</name>
</gene>
<sequence>MSPVRPRFYTPREVSRHCIVSDLWVSYLGRVYDLSPLLELHKGDVLLKPIIEAAGRDISHWFNPKTGDVKTHIDPQTGCLKYYTPQGRFLHTAPSFPCSGWDNDFGRPWWKESTYQIGILSSKTKFIRIINTLTSQEQALEVCSEETIREILGRYLPYNGHAGSYTWKFCGLPLDMDKTLQENGVWDEDEEFEELKIASDLYTPSIHLYFNDDLTEL</sequence>
<evidence type="ECO:0000250" key="1">
    <source>
        <dbReference type="UniProtKB" id="Q567I9"/>
    </source>
</evidence>
<evidence type="ECO:0000255" key="2">
    <source>
        <dbReference type="PROSITE-ProRule" id="PRU00279"/>
    </source>
</evidence>
<evidence type="ECO:0000305" key="3"/>
<protein>
    <recommendedName>
        <fullName>Cytochrome b5 domain-containing protein 1</fullName>
    </recommendedName>
</protein>
<accession>Q0IHR1</accession>
<proteinExistence type="evidence at transcript level"/>
<reference key="1">
    <citation type="submission" date="2006-09" db="EMBL/GenBank/DDBJ databases">
        <authorList>
            <consortium name="NIH - Xenopus Gene Collection (XGC) project"/>
        </authorList>
    </citation>
    <scope>NUCLEOTIDE SEQUENCE [LARGE SCALE MRNA]</scope>
    <source>
        <tissue>Testis</tissue>
    </source>
</reference>
<keyword id="KW-0966">Cell projection</keyword>
<keyword id="KW-0963">Cytoplasm</keyword>
<keyword id="KW-0206">Cytoskeleton</keyword>
<keyword id="KW-0349">Heme</keyword>
<keyword id="KW-0408">Iron</keyword>
<keyword id="KW-0479">Metal-binding</keyword>
<keyword id="KW-1185">Reference proteome</keyword>
<dbReference type="EMBL" id="BC123012">
    <property type="protein sequence ID" value="AAI23013.1"/>
    <property type="molecule type" value="mRNA"/>
</dbReference>
<dbReference type="RefSeq" id="NP_001072620.1">
    <property type="nucleotide sequence ID" value="NM_001079152.1"/>
</dbReference>
<dbReference type="SMR" id="Q0IHR1"/>
<dbReference type="FunCoup" id="Q0IHR1">
    <property type="interactions" value="44"/>
</dbReference>
<dbReference type="STRING" id="8364.ENSXETP00000002652"/>
<dbReference type="PaxDb" id="8364-ENSXETP00000058803"/>
<dbReference type="DNASU" id="780076"/>
<dbReference type="GeneID" id="780076"/>
<dbReference type="KEGG" id="xtr:780076"/>
<dbReference type="AGR" id="Xenbase:XB-GENE-5897831"/>
<dbReference type="CTD" id="124637"/>
<dbReference type="Xenbase" id="XB-GENE-5897831">
    <property type="gene designation" value="cyb5d1"/>
</dbReference>
<dbReference type="eggNOG" id="KOG0537">
    <property type="taxonomic scope" value="Eukaryota"/>
</dbReference>
<dbReference type="InParanoid" id="Q0IHR1"/>
<dbReference type="OMA" id="DLTHFFH"/>
<dbReference type="OrthoDB" id="260091at2759"/>
<dbReference type="Proteomes" id="UP000008143">
    <property type="component" value="Chromosome 3"/>
</dbReference>
<dbReference type="Bgee" id="ENSXETG00000034790">
    <property type="expression patterns" value="Expressed in testis and 10 other cell types or tissues"/>
</dbReference>
<dbReference type="GO" id="GO:0042995">
    <property type="term" value="C:cell projection"/>
    <property type="evidence" value="ECO:0007669"/>
    <property type="project" value="UniProtKB-KW"/>
</dbReference>
<dbReference type="GO" id="GO:0005737">
    <property type="term" value="C:cytoplasm"/>
    <property type="evidence" value="ECO:0007669"/>
    <property type="project" value="UniProtKB-KW"/>
</dbReference>
<dbReference type="GO" id="GO:0005856">
    <property type="term" value="C:cytoskeleton"/>
    <property type="evidence" value="ECO:0007669"/>
    <property type="project" value="UniProtKB-KW"/>
</dbReference>
<dbReference type="GO" id="GO:0046872">
    <property type="term" value="F:metal ion binding"/>
    <property type="evidence" value="ECO:0007669"/>
    <property type="project" value="UniProtKB-KW"/>
</dbReference>
<dbReference type="GO" id="GO:0003356">
    <property type="term" value="P:regulation of cilium beat frequency"/>
    <property type="evidence" value="ECO:0000250"/>
    <property type="project" value="UniProtKB"/>
</dbReference>
<dbReference type="Gene3D" id="3.10.120.10">
    <property type="entry name" value="Cytochrome b5-like heme/steroid binding domain"/>
    <property type="match status" value="1"/>
</dbReference>
<dbReference type="InterPro" id="IPR001199">
    <property type="entry name" value="Cyt_B5-like_heme/steroid-bd"/>
</dbReference>
<dbReference type="InterPro" id="IPR036400">
    <property type="entry name" value="Cyt_B5-like_heme/steroid_sf"/>
</dbReference>
<dbReference type="InterPro" id="IPR052320">
    <property type="entry name" value="Cytochrome_b5_domain"/>
</dbReference>
<dbReference type="PANTHER" id="PTHR21281">
    <property type="entry name" value="CYTOCHROME B5 DOMAIN-CONTAINING PROTEIN 1"/>
    <property type="match status" value="1"/>
</dbReference>
<dbReference type="PANTHER" id="PTHR21281:SF0">
    <property type="entry name" value="CYTOCHROME B5 DOMAIN-CONTAINING PROTEIN 1"/>
    <property type="match status" value="1"/>
</dbReference>
<dbReference type="Pfam" id="PF00173">
    <property type="entry name" value="Cyt-b5"/>
    <property type="match status" value="1"/>
</dbReference>
<dbReference type="SMART" id="SM01117">
    <property type="entry name" value="Cyt-b5"/>
    <property type="match status" value="1"/>
</dbReference>
<dbReference type="SUPFAM" id="SSF55856">
    <property type="entry name" value="Cytochrome b5-like heme/steroid binding domain"/>
    <property type="match status" value="1"/>
</dbReference>
<dbReference type="PROSITE" id="PS50255">
    <property type="entry name" value="CYTOCHROME_B5_2"/>
    <property type="match status" value="1"/>
</dbReference>